<dbReference type="EC" id="4.2.3.3" evidence="1"/>
<dbReference type="EMBL" id="CP000388">
    <property type="protein sequence ID" value="ABG39511.1"/>
    <property type="molecule type" value="Genomic_DNA"/>
</dbReference>
<dbReference type="RefSeq" id="WP_011573868.1">
    <property type="nucleotide sequence ID" value="NC_008228.1"/>
</dbReference>
<dbReference type="SMR" id="Q15X77"/>
<dbReference type="STRING" id="342610.Patl_0985"/>
<dbReference type="KEGG" id="pat:Patl_0985"/>
<dbReference type="eggNOG" id="COG1803">
    <property type="taxonomic scope" value="Bacteria"/>
</dbReference>
<dbReference type="HOGENOM" id="CLU_120420_0_1_6"/>
<dbReference type="OrthoDB" id="9787147at2"/>
<dbReference type="Proteomes" id="UP000001981">
    <property type="component" value="Chromosome"/>
</dbReference>
<dbReference type="GO" id="GO:0005829">
    <property type="term" value="C:cytosol"/>
    <property type="evidence" value="ECO:0007669"/>
    <property type="project" value="TreeGrafter"/>
</dbReference>
<dbReference type="GO" id="GO:0008929">
    <property type="term" value="F:methylglyoxal synthase activity"/>
    <property type="evidence" value="ECO:0007669"/>
    <property type="project" value="UniProtKB-UniRule"/>
</dbReference>
<dbReference type="GO" id="GO:0019242">
    <property type="term" value="P:methylglyoxal biosynthetic process"/>
    <property type="evidence" value="ECO:0007669"/>
    <property type="project" value="UniProtKB-UniRule"/>
</dbReference>
<dbReference type="CDD" id="cd01422">
    <property type="entry name" value="MGS"/>
    <property type="match status" value="1"/>
</dbReference>
<dbReference type="Gene3D" id="3.40.50.1380">
    <property type="entry name" value="Methylglyoxal synthase-like domain"/>
    <property type="match status" value="1"/>
</dbReference>
<dbReference type="HAMAP" id="MF_00549">
    <property type="entry name" value="Methylglyoxal_synth"/>
    <property type="match status" value="1"/>
</dbReference>
<dbReference type="InterPro" id="IPR004363">
    <property type="entry name" value="Methylgl_synth"/>
</dbReference>
<dbReference type="InterPro" id="IPR018148">
    <property type="entry name" value="Methylglyoxal_synth_AS"/>
</dbReference>
<dbReference type="InterPro" id="IPR011607">
    <property type="entry name" value="MGS-like_dom"/>
</dbReference>
<dbReference type="InterPro" id="IPR036914">
    <property type="entry name" value="MGS-like_dom_sf"/>
</dbReference>
<dbReference type="NCBIfam" id="TIGR00160">
    <property type="entry name" value="MGSA"/>
    <property type="match status" value="1"/>
</dbReference>
<dbReference type="NCBIfam" id="NF003559">
    <property type="entry name" value="PRK05234.1"/>
    <property type="match status" value="1"/>
</dbReference>
<dbReference type="PANTHER" id="PTHR30492">
    <property type="entry name" value="METHYLGLYOXAL SYNTHASE"/>
    <property type="match status" value="1"/>
</dbReference>
<dbReference type="PANTHER" id="PTHR30492:SF0">
    <property type="entry name" value="METHYLGLYOXAL SYNTHASE"/>
    <property type="match status" value="1"/>
</dbReference>
<dbReference type="Pfam" id="PF02142">
    <property type="entry name" value="MGS"/>
    <property type="match status" value="1"/>
</dbReference>
<dbReference type="PIRSF" id="PIRSF006614">
    <property type="entry name" value="Methylglyox_syn"/>
    <property type="match status" value="1"/>
</dbReference>
<dbReference type="SMART" id="SM00851">
    <property type="entry name" value="MGS"/>
    <property type="match status" value="1"/>
</dbReference>
<dbReference type="SUPFAM" id="SSF52335">
    <property type="entry name" value="Methylglyoxal synthase-like"/>
    <property type="match status" value="1"/>
</dbReference>
<dbReference type="PROSITE" id="PS01335">
    <property type="entry name" value="METHYLGLYOXAL_SYNTH"/>
    <property type="match status" value="1"/>
</dbReference>
<dbReference type="PROSITE" id="PS51855">
    <property type="entry name" value="MGS"/>
    <property type="match status" value="1"/>
</dbReference>
<comment type="function">
    <text evidence="1">Catalyzes the formation of methylglyoxal from dihydroxyacetone phosphate.</text>
</comment>
<comment type="catalytic activity">
    <reaction evidence="1">
        <text>dihydroxyacetone phosphate = methylglyoxal + phosphate</text>
        <dbReference type="Rhea" id="RHEA:17937"/>
        <dbReference type="ChEBI" id="CHEBI:17158"/>
        <dbReference type="ChEBI" id="CHEBI:43474"/>
        <dbReference type="ChEBI" id="CHEBI:57642"/>
        <dbReference type="EC" id="4.2.3.3"/>
    </reaction>
</comment>
<comment type="similarity">
    <text evidence="1">Belongs to the methylglyoxal synthase family.</text>
</comment>
<proteinExistence type="inferred from homology"/>
<keyword id="KW-0456">Lyase</keyword>
<protein>
    <recommendedName>
        <fullName evidence="1">Methylglyoxal synthase</fullName>
        <shortName evidence="1">MGS</shortName>
        <ecNumber evidence="1">4.2.3.3</ecNumber>
    </recommendedName>
</protein>
<organism>
    <name type="scientific">Pseudoalteromonas atlantica (strain T6c / ATCC BAA-1087)</name>
    <dbReference type="NCBI Taxonomy" id="3042615"/>
    <lineage>
        <taxon>Bacteria</taxon>
        <taxon>Pseudomonadati</taxon>
        <taxon>Pseudomonadota</taxon>
        <taxon>Gammaproteobacteria</taxon>
        <taxon>Alteromonadales</taxon>
        <taxon>Alteromonadaceae</taxon>
        <taxon>Paraglaciecola</taxon>
    </lineage>
</organism>
<gene>
    <name evidence="1" type="primary">mgsA</name>
    <name type="ordered locus">Patl_0985</name>
</gene>
<feature type="chain" id="PRO_1000146628" description="Methylglyoxal synthase">
    <location>
        <begin position="1"/>
        <end position="135"/>
    </location>
</feature>
<feature type="domain" description="MGS-like" evidence="1">
    <location>
        <begin position="1"/>
        <end position="135"/>
    </location>
</feature>
<feature type="active site" description="Proton donor/acceptor" evidence="1">
    <location>
        <position position="62"/>
    </location>
</feature>
<feature type="binding site" evidence="1">
    <location>
        <position position="10"/>
    </location>
    <ligand>
        <name>substrate</name>
    </ligand>
</feature>
<feature type="binding site" evidence="1">
    <location>
        <position position="14"/>
    </location>
    <ligand>
        <name>substrate</name>
    </ligand>
</feature>
<feature type="binding site" evidence="1">
    <location>
        <begin position="36"/>
        <end position="39"/>
    </location>
    <ligand>
        <name>substrate</name>
    </ligand>
</feature>
<feature type="binding site" evidence="1">
    <location>
        <begin position="56"/>
        <end position="57"/>
    </location>
    <ligand>
        <name>substrate</name>
    </ligand>
</feature>
<feature type="binding site" evidence="1">
    <location>
        <position position="89"/>
    </location>
    <ligand>
        <name>substrate</name>
    </ligand>
</feature>
<name>MGSA_PSEA6</name>
<reference key="1">
    <citation type="submission" date="2006-06" db="EMBL/GenBank/DDBJ databases">
        <title>Complete sequence of Pseudoalteromonas atlantica T6c.</title>
        <authorList>
            <consortium name="US DOE Joint Genome Institute"/>
            <person name="Copeland A."/>
            <person name="Lucas S."/>
            <person name="Lapidus A."/>
            <person name="Barry K."/>
            <person name="Detter J.C."/>
            <person name="Glavina del Rio T."/>
            <person name="Hammon N."/>
            <person name="Israni S."/>
            <person name="Dalin E."/>
            <person name="Tice H."/>
            <person name="Pitluck S."/>
            <person name="Saunders E."/>
            <person name="Brettin T."/>
            <person name="Bruce D."/>
            <person name="Han C."/>
            <person name="Tapia R."/>
            <person name="Gilna P."/>
            <person name="Schmutz J."/>
            <person name="Larimer F."/>
            <person name="Land M."/>
            <person name="Hauser L."/>
            <person name="Kyrpides N."/>
            <person name="Kim E."/>
            <person name="Karls A.C."/>
            <person name="Bartlett D."/>
            <person name="Higgins B.P."/>
            <person name="Richardson P."/>
        </authorList>
    </citation>
    <scope>NUCLEOTIDE SEQUENCE [LARGE SCALE GENOMIC DNA]</scope>
    <source>
        <strain>T6c / ATCC BAA-1087</strain>
    </source>
</reference>
<accession>Q15X77</accession>
<sequence>MQKTLALVAHDHKKPELIRWSLEHKAELEKHNLVATGTTGGLLQEALNLPVTRYKSGPLGGDQQIGALIAEGKLDALIFFWDPLNPAPHDPDVKALLRLCSVWNLPVACNTSTADMLITSPLFIEGLYERAVPEF</sequence>
<evidence type="ECO:0000255" key="1">
    <source>
        <dbReference type="HAMAP-Rule" id="MF_00549"/>
    </source>
</evidence>